<reference key="1">
    <citation type="journal article" date="1995" name="Mol. Microbiol.">
        <title>Molecular analysis of the ams operon required for exopolysaccharide synthesis of Erwinia amylovora.</title>
        <authorList>
            <person name="Bugert P."/>
            <person name="Geider K."/>
        </authorList>
    </citation>
    <scope>NUCLEOTIDE SEQUENCE [GENOMIC DNA]</scope>
    <source>
        <strain>EA1/79</strain>
    </source>
</reference>
<reference key="2">
    <citation type="submission" date="2011-08" db="EMBL/GenBank/DDBJ databases">
        <authorList>
            <person name="Geider K.K."/>
        </authorList>
    </citation>
    <scope>SEQUENCE REVISION TO 14; 221; 235 AND 311</scope>
</reference>
<name>AMSH_ERWAM</name>
<proteinExistence type="inferred from homology"/>
<sequence>MIIIKTKLIPLMVSAALLSGCTIVPGNHLSTMGKDVVEQQDSDFDIDKYVNIFPLTPSLVERMKPKPVVAQANATLQRELQNYEYRIGVGDVLMVTVWDHPELTTPAGQYRSASDTGNWVHSDGTIFYPYIGRVRVAGHTVQETRDEIASRLSKYVESPQVDVNVASFKSQKTYVTGEVTTSGQQAITNVPLTILDAINAAGGLTATADWRNVVLTHDGREQPVSLQALMQNGDLSQNHLLYPGDILYVPRNDDLKVFVMGEVKQQATLKMDRSGMTLSEALGSAQGMDQSVADATGVFVIRPVKGANRSKIANIYQLNTKDAAAMVMGTEFRLEPYDIVYVTSTPLTRWNRVISQLVPTISGVYDATRNVQTIHKW</sequence>
<comment type="function">
    <text>Involved in the biosynthesis of amylovoran which functions as a virulence factor. Might be involved in the translocation of polysaccharides across the outer membrane.</text>
</comment>
<comment type="subcellular location">
    <subcellularLocation>
        <location evidence="2">Cell outer membrane</location>
        <topology evidence="2">Multi-pass membrane protein</topology>
    </subcellularLocation>
</comment>
<comment type="similarity">
    <text evidence="2">Belongs to the BexD/CtrA/VexA family.</text>
</comment>
<protein>
    <recommendedName>
        <fullName>Amylovoran export outer membrane protein AmsH</fullName>
    </recommendedName>
</protein>
<evidence type="ECO:0000255" key="1">
    <source>
        <dbReference type="PROSITE-ProRule" id="PRU00303"/>
    </source>
</evidence>
<evidence type="ECO:0000305" key="2"/>
<organism>
    <name type="scientific">Erwinia amylovora</name>
    <name type="common">Fire blight bacteria</name>
    <dbReference type="NCBI Taxonomy" id="552"/>
    <lineage>
        <taxon>Bacteria</taxon>
        <taxon>Pseudomonadati</taxon>
        <taxon>Pseudomonadota</taxon>
        <taxon>Gammaproteobacteria</taxon>
        <taxon>Enterobacterales</taxon>
        <taxon>Erwiniaceae</taxon>
        <taxon>Erwinia</taxon>
    </lineage>
</organism>
<dbReference type="EMBL" id="X77921">
    <property type="protein sequence ID" value="CAA54880.2"/>
    <property type="molecule type" value="Genomic_DNA"/>
</dbReference>
<dbReference type="PIR" id="S61892">
    <property type="entry name" value="S61892"/>
</dbReference>
<dbReference type="SMR" id="Q46629"/>
<dbReference type="GO" id="GO:0009279">
    <property type="term" value="C:cell outer membrane"/>
    <property type="evidence" value="ECO:0007669"/>
    <property type="project" value="UniProtKB-SubCell"/>
</dbReference>
<dbReference type="GO" id="GO:0046930">
    <property type="term" value="C:pore complex"/>
    <property type="evidence" value="ECO:0007669"/>
    <property type="project" value="UniProtKB-KW"/>
</dbReference>
<dbReference type="GO" id="GO:0015159">
    <property type="term" value="F:polysaccharide transmembrane transporter activity"/>
    <property type="evidence" value="ECO:0007669"/>
    <property type="project" value="InterPro"/>
</dbReference>
<dbReference type="GO" id="GO:0015288">
    <property type="term" value="F:porin activity"/>
    <property type="evidence" value="ECO:0007669"/>
    <property type="project" value="UniProtKB-KW"/>
</dbReference>
<dbReference type="GO" id="GO:0006811">
    <property type="term" value="P:monoatomic ion transport"/>
    <property type="evidence" value="ECO:0007669"/>
    <property type="project" value="UniProtKB-KW"/>
</dbReference>
<dbReference type="Gene3D" id="1.20.5.70">
    <property type="match status" value="1"/>
</dbReference>
<dbReference type="Gene3D" id="3.10.560.10">
    <property type="entry name" value="Outer membrane lipoprotein wza domain like"/>
    <property type="match status" value="2"/>
</dbReference>
<dbReference type="Gene3D" id="3.30.1950.10">
    <property type="entry name" value="wza like domain"/>
    <property type="match status" value="1"/>
</dbReference>
<dbReference type="InterPro" id="IPR049712">
    <property type="entry name" value="Poly_export"/>
</dbReference>
<dbReference type="InterPro" id="IPR003715">
    <property type="entry name" value="Poly_export_N"/>
</dbReference>
<dbReference type="InterPro" id="IPR054765">
    <property type="entry name" value="SLBB_dom"/>
</dbReference>
<dbReference type="InterPro" id="IPR040716">
    <property type="entry name" value="Wza_C"/>
</dbReference>
<dbReference type="NCBIfam" id="NF011658">
    <property type="entry name" value="PRK15078.1"/>
    <property type="match status" value="1"/>
</dbReference>
<dbReference type="PANTHER" id="PTHR33619">
    <property type="entry name" value="POLYSACCHARIDE EXPORT PROTEIN GFCE-RELATED"/>
    <property type="match status" value="1"/>
</dbReference>
<dbReference type="PANTHER" id="PTHR33619:SF3">
    <property type="entry name" value="POLYSACCHARIDE EXPORT PROTEIN GFCE-RELATED"/>
    <property type="match status" value="1"/>
</dbReference>
<dbReference type="Pfam" id="PF02563">
    <property type="entry name" value="Poly_export"/>
    <property type="match status" value="1"/>
</dbReference>
<dbReference type="Pfam" id="PF22461">
    <property type="entry name" value="SLBB_2"/>
    <property type="match status" value="2"/>
</dbReference>
<dbReference type="Pfam" id="PF18412">
    <property type="entry name" value="Wza_C"/>
    <property type="match status" value="1"/>
</dbReference>
<dbReference type="PROSITE" id="PS51257">
    <property type="entry name" value="PROKAR_LIPOPROTEIN"/>
    <property type="match status" value="1"/>
</dbReference>
<keyword id="KW-0998">Cell outer membrane</keyword>
<keyword id="KW-0406">Ion transport</keyword>
<keyword id="KW-0449">Lipoprotein</keyword>
<keyword id="KW-0472">Membrane</keyword>
<keyword id="KW-0564">Palmitate</keyword>
<keyword id="KW-0625">Polysaccharide transport</keyword>
<keyword id="KW-0626">Porin</keyword>
<keyword id="KW-0732">Signal</keyword>
<keyword id="KW-0762">Sugar transport</keyword>
<keyword id="KW-0812">Transmembrane</keyword>
<keyword id="KW-1134">Transmembrane beta strand</keyword>
<keyword id="KW-0813">Transport</keyword>
<keyword id="KW-0843">Virulence</keyword>
<gene>
    <name type="primary">amsH</name>
</gene>
<feature type="signal peptide" evidence="1">
    <location>
        <begin position="1"/>
        <end position="20"/>
    </location>
</feature>
<feature type="chain" id="PRO_0000025215" description="Amylovoran export outer membrane protein AmsH">
    <location>
        <begin position="21"/>
        <end position="377"/>
    </location>
</feature>
<feature type="lipid moiety-binding region" description="N-palmitoyl cysteine" evidence="1">
    <location>
        <position position="21"/>
    </location>
</feature>
<feature type="lipid moiety-binding region" description="S-diacylglycerol cysteine" evidence="1">
    <location>
        <position position="21"/>
    </location>
</feature>
<accession>Q46629</accession>